<feature type="signal peptide" evidence="1">
    <location>
        <begin position="1"/>
        <end position="17"/>
    </location>
</feature>
<feature type="chain" id="PRO_0000036255" description="Transthyretin-like protein 46">
    <location>
        <begin position="18"/>
        <end position="179"/>
    </location>
</feature>
<feature type="region of interest" description="Disordered" evidence="2">
    <location>
        <begin position="144"/>
        <end position="179"/>
    </location>
</feature>
<feature type="compositionally biased region" description="Basic and acidic residues" evidence="2">
    <location>
        <begin position="157"/>
        <end position="179"/>
    </location>
</feature>
<dbReference type="EMBL" id="Z73976">
    <property type="protein sequence ID" value="CAA98286.1"/>
    <property type="molecule type" value="Genomic_DNA"/>
</dbReference>
<dbReference type="PIR" id="T24642">
    <property type="entry name" value="T24642"/>
</dbReference>
<dbReference type="RefSeq" id="NP_505561.1">
    <property type="nucleotide sequence ID" value="NM_073160.7"/>
</dbReference>
<dbReference type="SMR" id="Q22285"/>
<dbReference type="BioGRID" id="44418">
    <property type="interactions" value="2"/>
</dbReference>
<dbReference type="FunCoup" id="Q22285">
    <property type="interactions" value="81"/>
</dbReference>
<dbReference type="IntAct" id="Q22285">
    <property type="interactions" value="1"/>
</dbReference>
<dbReference type="STRING" id="6239.T07C12.7.1"/>
<dbReference type="PaxDb" id="6239-T07C12.7"/>
<dbReference type="PeptideAtlas" id="Q22285"/>
<dbReference type="EnsemblMetazoa" id="T07C12.7.1">
    <property type="protein sequence ID" value="T07C12.7.1"/>
    <property type="gene ID" value="WBGene00011571"/>
</dbReference>
<dbReference type="GeneID" id="179384"/>
<dbReference type="KEGG" id="cel:CELE_T07C12.7"/>
<dbReference type="AGR" id="WB:WBGene00011571"/>
<dbReference type="CTD" id="179384"/>
<dbReference type="WormBase" id="T07C12.7">
    <property type="protein sequence ID" value="CE06389"/>
    <property type="gene ID" value="WBGene00011571"/>
    <property type="gene designation" value="ttr-46"/>
</dbReference>
<dbReference type="eggNOG" id="ENOG502SQ59">
    <property type="taxonomic scope" value="Eukaryota"/>
</dbReference>
<dbReference type="GeneTree" id="ENSGT00970000196209"/>
<dbReference type="HOGENOM" id="CLU_121109_4_1_1"/>
<dbReference type="InParanoid" id="Q22285"/>
<dbReference type="OMA" id="FHHEERE"/>
<dbReference type="OrthoDB" id="5822973at2759"/>
<dbReference type="PhylomeDB" id="Q22285"/>
<dbReference type="PRO" id="PR:Q22285"/>
<dbReference type="Proteomes" id="UP000001940">
    <property type="component" value="Chromosome V"/>
</dbReference>
<dbReference type="Bgee" id="WBGene00011571">
    <property type="expression patterns" value="Expressed in larva and 4 other cell types or tissues"/>
</dbReference>
<dbReference type="GO" id="GO:0009986">
    <property type="term" value="C:cell surface"/>
    <property type="evidence" value="ECO:0007669"/>
    <property type="project" value="InterPro"/>
</dbReference>
<dbReference type="GO" id="GO:0005576">
    <property type="term" value="C:extracellular region"/>
    <property type="evidence" value="ECO:0007669"/>
    <property type="project" value="UniProtKB-SubCell"/>
</dbReference>
<dbReference type="Gene3D" id="2.60.40.3330">
    <property type="match status" value="1"/>
</dbReference>
<dbReference type="InterPro" id="IPR001534">
    <property type="entry name" value="Transthyretin-like"/>
</dbReference>
<dbReference type="InterPro" id="IPR038479">
    <property type="entry name" value="Transthyretin-like_sf"/>
</dbReference>
<dbReference type="PANTHER" id="PTHR21700">
    <property type="entry name" value="TRANSTHYRETIN-LIKE FAMILY PROTEIN-RELATED"/>
    <property type="match status" value="1"/>
</dbReference>
<dbReference type="PANTHER" id="PTHR21700:SF124">
    <property type="entry name" value="TRANSTHYRETIN-LIKE PROTEIN 46"/>
    <property type="match status" value="1"/>
</dbReference>
<dbReference type="Pfam" id="PF01060">
    <property type="entry name" value="TTR-52"/>
    <property type="match status" value="1"/>
</dbReference>
<sequence>MNKLFVLLIALLGLTAAMRDQSIAVKGRLLCGNGPAANVRVKLWEEDTGPDPDDLLDQGYTDANGEFSLQGGTAELTPIDPVFKVYHKCDDSKLKPGARKVKLALPKSYITSGKVAKKTFDIGVLNLETVFAKEERELLVSRRRRGGFNADYMDPDNSEKDQSKSSEESEDKEKTVETF</sequence>
<comment type="subcellular location">
    <subcellularLocation>
        <location evidence="3">Secreted</location>
    </subcellularLocation>
</comment>
<comment type="similarity">
    <text evidence="3">Belongs to the nematode transthyretin-like family.</text>
</comment>
<organism>
    <name type="scientific">Caenorhabditis elegans</name>
    <dbReference type="NCBI Taxonomy" id="6239"/>
    <lineage>
        <taxon>Eukaryota</taxon>
        <taxon>Metazoa</taxon>
        <taxon>Ecdysozoa</taxon>
        <taxon>Nematoda</taxon>
        <taxon>Chromadorea</taxon>
        <taxon>Rhabditida</taxon>
        <taxon>Rhabditina</taxon>
        <taxon>Rhabditomorpha</taxon>
        <taxon>Rhabditoidea</taxon>
        <taxon>Rhabditidae</taxon>
        <taxon>Peloderinae</taxon>
        <taxon>Caenorhabditis</taxon>
    </lineage>
</organism>
<accession>Q22285</accession>
<name>TTR46_CAEEL</name>
<gene>
    <name type="primary">ttr-46</name>
    <name type="ORF">T07C12.7</name>
</gene>
<evidence type="ECO:0000255" key="1"/>
<evidence type="ECO:0000256" key="2">
    <source>
        <dbReference type="SAM" id="MobiDB-lite"/>
    </source>
</evidence>
<evidence type="ECO:0000305" key="3"/>
<reference key="1">
    <citation type="journal article" date="1998" name="Science">
        <title>Genome sequence of the nematode C. elegans: a platform for investigating biology.</title>
        <authorList>
            <consortium name="The C. elegans sequencing consortium"/>
        </authorList>
    </citation>
    <scope>NUCLEOTIDE SEQUENCE [LARGE SCALE GENOMIC DNA]</scope>
    <source>
        <strain>Bristol N2</strain>
    </source>
</reference>
<protein>
    <recommendedName>
        <fullName>Transthyretin-like protein 46</fullName>
    </recommendedName>
</protein>
<proteinExistence type="inferred from homology"/>
<keyword id="KW-1185">Reference proteome</keyword>
<keyword id="KW-0964">Secreted</keyword>
<keyword id="KW-0732">Signal</keyword>